<feature type="chain" id="PRO_0000453123" description="Protein IQ-DOMAIN 17">
    <location>
        <begin position="1"/>
        <end position="534"/>
    </location>
</feature>
<feature type="domain" description="IQ 1" evidence="2">
    <location>
        <begin position="131"/>
        <end position="159"/>
    </location>
</feature>
<feature type="domain" description="IQ 2" evidence="2">
    <location>
        <begin position="160"/>
        <end position="182"/>
    </location>
</feature>
<feature type="region of interest" description="Disordered" evidence="3">
    <location>
        <begin position="1"/>
        <end position="123"/>
    </location>
</feature>
<feature type="region of interest" description="Calmodulin-binding" evidence="5">
    <location>
        <begin position="157"/>
        <end position="173"/>
    </location>
</feature>
<feature type="region of interest" description="Disordered" evidence="3">
    <location>
        <begin position="259"/>
        <end position="290"/>
    </location>
</feature>
<feature type="region of interest" description="Disordered" evidence="3">
    <location>
        <begin position="308"/>
        <end position="406"/>
    </location>
</feature>
<feature type="region of interest" description="Disordered" evidence="3">
    <location>
        <begin position="441"/>
        <end position="495"/>
    </location>
</feature>
<feature type="region of interest" description="Disordered" evidence="3">
    <location>
        <begin position="512"/>
        <end position="534"/>
    </location>
</feature>
<feature type="compositionally biased region" description="Polar residues" evidence="3">
    <location>
        <begin position="1"/>
        <end position="12"/>
    </location>
</feature>
<feature type="compositionally biased region" description="Polar residues" evidence="3">
    <location>
        <begin position="73"/>
        <end position="92"/>
    </location>
</feature>
<feature type="compositionally biased region" description="Low complexity" evidence="3">
    <location>
        <begin position="97"/>
        <end position="108"/>
    </location>
</feature>
<feature type="compositionally biased region" description="Polar residues" evidence="3">
    <location>
        <begin position="111"/>
        <end position="123"/>
    </location>
</feature>
<feature type="compositionally biased region" description="Polar residues" evidence="3">
    <location>
        <begin position="326"/>
        <end position="342"/>
    </location>
</feature>
<feature type="compositionally biased region" description="Low complexity" evidence="3">
    <location>
        <begin position="343"/>
        <end position="355"/>
    </location>
</feature>
<feature type="compositionally biased region" description="Polar residues" evidence="3">
    <location>
        <begin position="362"/>
        <end position="372"/>
    </location>
</feature>
<feature type="compositionally biased region" description="Polar residues" evidence="3">
    <location>
        <begin position="395"/>
        <end position="406"/>
    </location>
</feature>
<feature type="compositionally biased region" description="Polar residues" evidence="3">
    <location>
        <begin position="445"/>
        <end position="455"/>
    </location>
</feature>
<feature type="compositionally biased region" description="Polar residues" evidence="3">
    <location>
        <begin position="480"/>
        <end position="490"/>
    </location>
</feature>
<feature type="sequence conflict" description="In Ref. 3; BAF00832." evidence="6" ref="3">
    <original>R</original>
    <variation>H</variation>
    <location>
        <position position="335"/>
    </location>
</feature>
<gene>
    <name evidence="5" type="primary">IQD17</name>
    <name evidence="7" type="ordered locus">At4g00820</name>
    <name evidence="8" type="ORF">A_TM018A10.13</name>
    <name evidence="8" type="ORF">T18A10.11</name>
</gene>
<sequence length="534" mass="59996">MGKKSGSSSSWLTAVKRAFRSPTKKEHNNNAHGNEVDEDEDKKKEKRRWLFRKSTNHDSPVKTSGVGKDAPAQKSTETTTIINPTVLSSVTEQRYDASTPPATVSAASETHPPSTTKELPNLTRRTYTAREDYAAVVIQTGFRGYLARRALRALKGLVKLQALVRGHNVRKQAKMTLRCMQALVRVQSRVLDQRKRLSHDGSRKSAFSDTQSVLESRYLQEISDRRSMSREGSSIAEDWDDRPHTIEEVKAMLQQRRDNALRRESNNSISQAFSHQVRRTRGSYSTGDEYEEERPKWLDRWMASKPWDKRASTDQRVPPVYKTVEIDTSQPYLTRGNSRTGASPSRSQRPSSPSRTSHHYQQHNFSSATPSPAKSRPIQIRSASPRIQRDDRSAYNYTSNTPSLRSNYSFTARSGYSVCTTTTTATNAALPNYMAITESAKARIRSQSAPRQRPSTPEKERISSARKRLSFPVPPLPQQMDGQSLRSPSFKSIGGSQLGALEQQSNYSSCCTESLGGGGEISPASTSDYRRWLR</sequence>
<keyword id="KW-0112">Calmodulin-binding</keyword>
<keyword id="KW-1003">Cell membrane</keyword>
<keyword id="KW-0963">Cytoplasm</keyword>
<keyword id="KW-0206">Cytoskeleton</keyword>
<keyword id="KW-0472">Membrane</keyword>
<keyword id="KW-1185">Reference proteome</keyword>
<keyword id="KW-0677">Repeat</keyword>
<comment type="function">
    <text evidence="1">May be involved in cooperative interactions with calmodulins or calmodulin-like proteins (By similarity). Recruits calmodulin proteins to microtubules, thus being a potential scaffold in cellular signaling and trafficking (By similarity). May associate with nucleic acids and regulate gene expression at the transcriptional or post-transcriptional level (By similarity).</text>
</comment>
<comment type="subunit">
    <text evidence="1">Binds to multiple calmodulin (CaM) in the presence of Ca(2+) and CaM-like proteins.</text>
</comment>
<comment type="subcellular location">
    <subcellularLocation>
        <location evidence="4">Cytoplasm</location>
        <location evidence="4">Cytoskeleton</location>
    </subcellularLocation>
    <subcellularLocation>
        <location evidence="4">Cell membrane</location>
    </subcellularLocation>
</comment>
<comment type="similarity">
    <text evidence="6">Belongs to the IQD family.</text>
</comment>
<comment type="sequence caution" evidence="6">
    <conflict type="erroneous gene model prediction">
        <sequence resource="EMBL-CDS" id="AAB62858"/>
    </conflict>
</comment>
<comment type="sequence caution" evidence="6">
    <conflict type="erroneous gene model prediction">
        <sequence resource="EMBL-CDS" id="CAB80891"/>
    </conflict>
</comment>
<reference key="1">
    <citation type="journal article" date="1999" name="Nature">
        <title>Sequence and analysis of chromosome 4 of the plant Arabidopsis thaliana.</title>
        <authorList>
            <person name="Mayer K.F.X."/>
            <person name="Schueller C."/>
            <person name="Wambutt R."/>
            <person name="Murphy G."/>
            <person name="Volckaert G."/>
            <person name="Pohl T."/>
            <person name="Duesterhoeft A."/>
            <person name="Stiekema W."/>
            <person name="Entian K.-D."/>
            <person name="Terryn N."/>
            <person name="Harris B."/>
            <person name="Ansorge W."/>
            <person name="Brandt P."/>
            <person name="Grivell L.A."/>
            <person name="Rieger M."/>
            <person name="Weichselgartner M."/>
            <person name="de Simone V."/>
            <person name="Obermaier B."/>
            <person name="Mache R."/>
            <person name="Mueller M."/>
            <person name="Kreis M."/>
            <person name="Delseny M."/>
            <person name="Puigdomenech P."/>
            <person name="Watson M."/>
            <person name="Schmidtheini T."/>
            <person name="Reichert B."/>
            <person name="Portetelle D."/>
            <person name="Perez-Alonso M."/>
            <person name="Boutry M."/>
            <person name="Bancroft I."/>
            <person name="Vos P."/>
            <person name="Hoheisel J."/>
            <person name="Zimmermann W."/>
            <person name="Wedler H."/>
            <person name="Ridley P."/>
            <person name="Langham S.-A."/>
            <person name="McCullagh B."/>
            <person name="Bilham L."/>
            <person name="Robben J."/>
            <person name="van der Schueren J."/>
            <person name="Grymonprez B."/>
            <person name="Chuang Y.-J."/>
            <person name="Vandenbussche F."/>
            <person name="Braeken M."/>
            <person name="Weltjens I."/>
            <person name="Voet M."/>
            <person name="Bastiaens I."/>
            <person name="Aert R."/>
            <person name="Defoor E."/>
            <person name="Weitzenegger T."/>
            <person name="Bothe G."/>
            <person name="Ramsperger U."/>
            <person name="Hilbert H."/>
            <person name="Braun M."/>
            <person name="Holzer E."/>
            <person name="Brandt A."/>
            <person name="Peters S."/>
            <person name="van Staveren M."/>
            <person name="Dirkse W."/>
            <person name="Mooijman P."/>
            <person name="Klein Lankhorst R."/>
            <person name="Rose M."/>
            <person name="Hauf J."/>
            <person name="Koetter P."/>
            <person name="Berneiser S."/>
            <person name="Hempel S."/>
            <person name="Feldpausch M."/>
            <person name="Lamberth S."/>
            <person name="Van den Daele H."/>
            <person name="De Keyser A."/>
            <person name="Buysshaert C."/>
            <person name="Gielen J."/>
            <person name="Villarroel R."/>
            <person name="De Clercq R."/>
            <person name="van Montagu M."/>
            <person name="Rogers J."/>
            <person name="Cronin A."/>
            <person name="Quail M.A."/>
            <person name="Bray-Allen S."/>
            <person name="Clark L."/>
            <person name="Doggett J."/>
            <person name="Hall S."/>
            <person name="Kay M."/>
            <person name="Lennard N."/>
            <person name="McLay K."/>
            <person name="Mayes R."/>
            <person name="Pettett A."/>
            <person name="Rajandream M.A."/>
            <person name="Lyne M."/>
            <person name="Benes V."/>
            <person name="Rechmann S."/>
            <person name="Borkova D."/>
            <person name="Bloecker H."/>
            <person name="Scharfe M."/>
            <person name="Grimm M."/>
            <person name="Loehnert T.-H."/>
            <person name="Dose S."/>
            <person name="de Haan M."/>
            <person name="Maarse A.C."/>
            <person name="Schaefer M."/>
            <person name="Mueller-Auer S."/>
            <person name="Gabel C."/>
            <person name="Fuchs M."/>
            <person name="Fartmann B."/>
            <person name="Granderath K."/>
            <person name="Dauner D."/>
            <person name="Herzl A."/>
            <person name="Neumann S."/>
            <person name="Argiriou A."/>
            <person name="Vitale D."/>
            <person name="Liguori R."/>
            <person name="Piravandi E."/>
            <person name="Massenet O."/>
            <person name="Quigley F."/>
            <person name="Clabauld G."/>
            <person name="Muendlein A."/>
            <person name="Felber R."/>
            <person name="Schnabl S."/>
            <person name="Hiller R."/>
            <person name="Schmidt W."/>
            <person name="Lecharny A."/>
            <person name="Aubourg S."/>
            <person name="Chefdor F."/>
            <person name="Cooke R."/>
            <person name="Berger C."/>
            <person name="Monfort A."/>
            <person name="Casacuberta E."/>
            <person name="Gibbons T."/>
            <person name="Weber N."/>
            <person name="Vandenbol M."/>
            <person name="Bargues M."/>
            <person name="Terol J."/>
            <person name="Torres A."/>
            <person name="Perez-Perez A."/>
            <person name="Purnelle B."/>
            <person name="Bent E."/>
            <person name="Johnson S."/>
            <person name="Tacon D."/>
            <person name="Jesse T."/>
            <person name="Heijnen L."/>
            <person name="Schwarz S."/>
            <person name="Scholler P."/>
            <person name="Heber S."/>
            <person name="Francs P."/>
            <person name="Bielke C."/>
            <person name="Frishman D."/>
            <person name="Haase D."/>
            <person name="Lemcke K."/>
            <person name="Mewes H.-W."/>
            <person name="Stocker S."/>
            <person name="Zaccaria P."/>
            <person name="Bevan M."/>
            <person name="Wilson R.K."/>
            <person name="de la Bastide M."/>
            <person name="Habermann K."/>
            <person name="Parnell L."/>
            <person name="Dedhia N."/>
            <person name="Gnoj L."/>
            <person name="Schutz K."/>
            <person name="Huang E."/>
            <person name="Spiegel L."/>
            <person name="Sekhon M."/>
            <person name="Murray J."/>
            <person name="Sheet P."/>
            <person name="Cordes M."/>
            <person name="Abu-Threideh J."/>
            <person name="Stoneking T."/>
            <person name="Kalicki J."/>
            <person name="Graves T."/>
            <person name="Harmon G."/>
            <person name="Edwards J."/>
            <person name="Latreille P."/>
            <person name="Courtney L."/>
            <person name="Cloud J."/>
            <person name="Abbott A."/>
            <person name="Scott K."/>
            <person name="Johnson D."/>
            <person name="Minx P."/>
            <person name="Bentley D."/>
            <person name="Fulton B."/>
            <person name="Miller N."/>
            <person name="Greco T."/>
            <person name="Kemp K."/>
            <person name="Kramer J."/>
            <person name="Fulton L."/>
            <person name="Mardis E."/>
            <person name="Dante M."/>
            <person name="Pepin K."/>
            <person name="Hillier L.W."/>
            <person name="Nelson J."/>
            <person name="Spieth J."/>
            <person name="Ryan E."/>
            <person name="Andrews S."/>
            <person name="Geisel C."/>
            <person name="Layman D."/>
            <person name="Du H."/>
            <person name="Ali J."/>
            <person name="Berghoff A."/>
            <person name="Jones K."/>
            <person name="Drone K."/>
            <person name="Cotton M."/>
            <person name="Joshu C."/>
            <person name="Antonoiu B."/>
            <person name="Zidanic M."/>
            <person name="Strong C."/>
            <person name="Sun H."/>
            <person name="Lamar B."/>
            <person name="Yordan C."/>
            <person name="Ma P."/>
            <person name="Zhong J."/>
            <person name="Preston R."/>
            <person name="Vil D."/>
            <person name="Shekher M."/>
            <person name="Matero A."/>
            <person name="Shah R."/>
            <person name="Swaby I.K."/>
            <person name="O'Shaughnessy A."/>
            <person name="Rodriguez M."/>
            <person name="Hoffman J."/>
            <person name="Till S."/>
            <person name="Granat S."/>
            <person name="Shohdy N."/>
            <person name="Hasegawa A."/>
            <person name="Hameed A."/>
            <person name="Lodhi M."/>
            <person name="Johnson A."/>
            <person name="Chen E."/>
            <person name="Marra M.A."/>
            <person name="Martienssen R."/>
            <person name="McCombie W.R."/>
        </authorList>
    </citation>
    <scope>NUCLEOTIDE SEQUENCE [LARGE SCALE GENOMIC DNA]</scope>
    <source>
        <strain>cv. Columbia</strain>
    </source>
</reference>
<reference key="2">
    <citation type="journal article" date="2017" name="Plant J.">
        <title>Araport11: a complete reannotation of the Arabidopsis thaliana reference genome.</title>
        <authorList>
            <person name="Cheng C.Y."/>
            <person name="Krishnakumar V."/>
            <person name="Chan A.P."/>
            <person name="Thibaud-Nissen F."/>
            <person name="Schobel S."/>
            <person name="Town C.D."/>
        </authorList>
    </citation>
    <scope>GENOME REANNOTATION</scope>
    <source>
        <strain>cv. Columbia</strain>
    </source>
</reference>
<reference key="3">
    <citation type="submission" date="2006-07" db="EMBL/GenBank/DDBJ databases">
        <title>Large-scale analysis of RIKEN Arabidopsis full-length (RAFL) cDNAs.</title>
        <authorList>
            <person name="Totoki Y."/>
            <person name="Seki M."/>
            <person name="Ishida J."/>
            <person name="Nakajima M."/>
            <person name="Enju A."/>
            <person name="Kamiya A."/>
            <person name="Narusaka M."/>
            <person name="Shin-i T."/>
            <person name="Nakagawa M."/>
            <person name="Sakamoto N."/>
            <person name="Oishi K."/>
            <person name="Kohara Y."/>
            <person name="Kobayashi M."/>
            <person name="Toyoda A."/>
            <person name="Sakaki Y."/>
            <person name="Sakurai T."/>
            <person name="Iida K."/>
            <person name="Akiyama K."/>
            <person name="Satou M."/>
            <person name="Toyoda T."/>
            <person name="Konagaya A."/>
            <person name="Carninci P."/>
            <person name="Kawai J."/>
            <person name="Hayashizaki Y."/>
            <person name="Shinozaki K."/>
        </authorList>
    </citation>
    <scope>NUCLEOTIDE SEQUENCE [LARGE SCALE MRNA]</scope>
    <source>
        <strain>cv. Columbia</strain>
    </source>
</reference>
<reference key="4">
    <citation type="journal article" date="2005" name="BMC Evol. Biol.">
        <title>Genome-wide comparative analysis of the IQD gene families in Arabidopsis thaliana and Oryza sativa.</title>
        <authorList>
            <person name="Abel S."/>
            <person name="Savchenko T."/>
            <person name="Levy M."/>
        </authorList>
    </citation>
    <scope>INTERACTION WITH CALMODULIN</scope>
    <scope>GENE FAMILY</scope>
    <scope>NOMENCLATURE</scope>
    <source>
        <strain>cv. Columbia</strain>
    </source>
</reference>
<reference key="5">
    <citation type="journal article" date="2017" name="Plant Physiol.">
        <title>The IQD family of calmodulin-binding proteins links calcium signaling to microtubules, membrane subdomains, and the nucleus.</title>
        <authorList>
            <person name="Buerstenbinder K."/>
            <person name="Moeller B."/>
            <person name="Ploetner R."/>
            <person name="Stamm G."/>
            <person name="Hause G."/>
            <person name="Mitra D."/>
            <person name="Abel S."/>
        </authorList>
    </citation>
    <scope>SUBCELLULAR LOCATION</scope>
    <source>
        <strain>cv. Columbia</strain>
    </source>
</reference>
<reference key="6">
    <citation type="journal article" date="2017" name="Plant Signal. Behav.">
        <title>Functions of IQD proteins as hubs in cellular calcium and auxin signaling: A toolbox for shape formation and tissue-specification in plants?</title>
        <authorList>
            <person name="Buerstenbinder K."/>
            <person name="Mitra D."/>
            <person name="Quegwer J."/>
        </authorList>
    </citation>
    <scope>REVIEW</scope>
</reference>
<name>IQD17_ARATH</name>
<organism>
    <name type="scientific">Arabidopsis thaliana</name>
    <name type="common">Mouse-ear cress</name>
    <dbReference type="NCBI Taxonomy" id="3702"/>
    <lineage>
        <taxon>Eukaryota</taxon>
        <taxon>Viridiplantae</taxon>
        <taxon>Streptophyta</taxon>
        <taxon>Embryophyta</taxon>
        <taxon>Tracheophyta</taxon>
        <taxon>Spermatophyta</taxon>
        <taxon>Magnoliopsida</taxon>
        <taxon>eudicotyledons</taxon>
        <taxon>Gunneridae</taxon>
        <taxon>Pentapetalae</taxon>
        <taxon>rosids</taxon>
        <taxon>malvids</taxon>
        <taxon>Brassicales</taxon>
        <taxon>Brassicaceae</taxon>
        <taxon>Camelineae</taxon>
        <taxon>Arabidopsis</taxon>
    </lineage>
</organism>
<evidence type="ECO:0000250" key="1">
    <source>
        <dbReference type="UniProtKB" id="Q9SF32"/>
    </source>
</evidence>
<evidence type="ECO:0000255" key="2">
    <source>
        <dbReference type="PROSITE-ProRule" id="PRU00116"/>
    </source>
</evidence>
<evidence type="ECO:0000256" key="3">
    <source>
        <dbReference type="SAM" id="MobiDB-lite"/>
    </source>
</evidence>
<evidence type="ECO:0000269" key="4">
    <source>
    </source>
</evidence>
<evidence type="ECO:0000303" key="5">
    <source>
    </source>
</evidence>
<evidence type="ECO:0000305" key="6"/>
<evidence type="ECO:0000312" key="7">
    <source>
        <dbReference type="Araport" id="AT4G00820"/>
    </source>
</evidence>
<evidence type="ECO:0000312" key="8">
    <source>
        <dbReference type="EMBL" id="AAB62858.1"/>
    </source>
</evidence>
<dbReference type="EMBL" id="AF013294">
    <property type="protein sequence ID" value="AAB62858.1"/>
    <property type="status" value="ALT_SEQ"/>
    <property type="molecule type" value="Genomic_DNA"/>
</dbReference>
<dbReference type="EMBL" id="AL161472">
    <property type="protein sequence ID" value="CAB80891.1"/>
    <property type="status" value="ALT_SEQ"/>
    <property type="molecule type" value="Genomic_DNA"/>
</dbReference>
<dbReference type="EMBL" id="CP002687">
    <property type="protein sequence ID" value="AEE81939.1"/>
    <property type="molecule type" value="Genomic_DNA"/>
</dbReference>
<dbReference type="EMBL" id="AK228943">
    <property type="protein sequence ID" value="BAF00832.1"/>
    <property type="molecule type" value="mRNA"/>
</dbReference>
<dbReference type="PIR" id="T01564">
    <property type="entry name" value="T01564"/>
</dbReference>
<dbReference type="RefSeq" id="NP_567191.2">
    <property type="nucleotide sequence ID" value="NM_116308.4"/>
</dbReference>
<dbReference type="SMR" id="F4JHN2"/>
<dbReference type="FunCoup" id="F4JHN2">
    <property type="interactions" value="246"/>
</dbReference>
<dbReference type="STRING" id="3702.F4JHN2"/>
<dbReference type="iPTMnet" id="F4JHN2"/>
<dbReference type="PaxDb" id="3702-AT4G00820.1"/>
<dbReference type="ProteomicsDB" id="197591"/>
<dbReference type="EnsemblPlants" id="AT4G00820.1">
    <property type="protein sequence ID" value="AT4G00820.1"/>
    <property type="gene ID" value="AT4G00820"/>
</dbReference>
<dbReference type="GeneID" id="828002"/>
<dbReference type="Gramene" id="AT4G00820.1">
    <property type="protein sequence ID" value="AT4G00820.1"/>
    <property type="gene ID" value="AT4G00820"/>
</dbReference>
<dbReference type="KEGG" id="ath:AT4G00820"/>
<dbReference type="Araport" id="AT4G00820"/>
<dbReference type="TAIR" id="AT4G00820">
    <property type="gene designation" value="IQD17"/>
</dbReference>
<dbReference type="eggNOG" id="ENOG502R300">
    <property type="taxonomic scope" value="Eukaryota"/>
</dbReference>
<dbReference type="HOGENOM" id="CLU_024547_1_0_1"/>
<dbReference type="InParanoid" id="F4JHN2"/>
<dbReference type="OMA" id="NNAHGNE"/>
<dbReference type="PRO" id="PR:F4JHN2"/>
<dbReference type="Proteomes" id="UP000006548">
    <property type="component" value="Chromosome 4"/>
</dbReference>
<dbReference type="ExpressionAtlas" id="F4JHN2">
    <property type="expression patterns" value="baseline and differential"/>
</dbReference>
<dbReference type="GO" id="GO:0005737">
    <property type="term" value="C:cytoplasm"/>
    <property type="evidence" value="ECO:0007669"/>
    <property type="project" value="UniProtKB-KW"/>
</dbReference>
<dbReference type="GO" id="GO:0005856">
    <property type="term" value="C:cytoskeleton"/>
    <property type="evidence" value="ECO:0007669"/>
    <property type="project" value="UniProtKB-SubCell"/>
</dbReference>
<dbReference type="GO" id="GO:0005886">
    <property type="term" value="C:plasma membrane"/>
    <property type="evidence" value="ECO:0007669"/>
    <property type="project" value="UniProtKB-SubCell"/>
</dbReference>
<dbReference type="GO" id="GO:0005516">
    <property type="term" value="F:calmodulin binding"/>
    <property type="evidence" value="ECO:0007669"/>
    <property type="project" value="UniProtKB-KW"/>
</dbReference>
<dbReference type="FunFam" id="1.20.5.190:FF:000062">
    <property type="entry name" value="IQ-domain 11"/>
    <property type="match status" value="1"/>
</dbReference>
<dbReference type="Gene3D" id="1.20.5.190">
    <property type="match status" value="1"/>
</dbReference>
<dbReference type="InterPro" id="IPR025064">
    <property type="entry name" value="DUF4005"/>
</dbReference>
<dbReference type="InterPro" id="IPR000048">
    <property type="entry name" value="IQ_motif_EF-hand-BS"/>
</dbReference>
<dbReference type="PANTHER" id="PTHR32295">
    <property type="entry name" value="IQ-DOMAIN 5-RELATED"/>
    <property type="match status" value="1"/>
</dbReference>
<dbReference type="PANTHER" id="PTHR32295:SF277">
    <property type="entry name" value="PROTEIN IQ-DOMAIN 17"/>
    <property type="match status" value="1"/>
</dbReference>
<dbReference type="Pfam" id="PF13178">
    <property type="entry name" value="DUF4005"/>
    <property type="match status" value="1"/>
</dbReference>
<dbReference type="Pfam" id="PF00612">
    <property type="entry name" value="IQ"/>
    <property type="match status" value="2"/>
</dbReference>
<dbReference type="SMART" id="SM00015">
    <property type="entry name" value="IQ"/>
    <property type="match status" value="2"/>
</dbReference>
<dbReference type="PROSITE" id="PS50096">
    <property type="entry name" value="IQ"/>
    <property type="match status" value="2"/>
</dbReference>
<protein>
    <recommendedName>
        <fullName evidence="5">Protein IQ-DOMAIN 17</fullName>
        <shortName evidence="5">AtIQD17</shortName>
    </recommendedName>
</protein>
<proteinExistence type="evidence at protein level"/>
<accession>F4JHN2</accession>
<accession>O23094</accession>
<accession>Q0WPW7</accession>